<proteinExistence type="evidence at protein level"/>
<comment type="function">
    <text evidence="1">RuBisCO catalyzes two reactions: the carboxylation of D-ribulose 1,5-bisphosphate, the primary event in carbon dioxide fixation, as well as the oxidative fragmentation of the pentose substrate. Both reactions occur simultaneously and in competition at the same active site. Although the small subunit is not catalytic it is essential for maximal activity.</text>
</comment>
<comment type="subunit">
    <text evidence="1">Heterohexadecamer of 8 large and 8 small subunits.</text>
</comment>
<comment type="subcellular location">
    <subcellularLocation>
        <location evidence="1">Plastid</location>
        <location evidence="1">Chloroplast</location>
    </subcellularLocation>
</comment>
<comment type="miscellaneous">
    <text evidence="1">The basic functional RuBisCO is composed of a large chain homodimer in a 'head-to-tail' conformation. In form I RuBisCO this homodimer is arranged in a barrel-like tetramer with the small subunits forming a tetrameric 'cap' on each end of the 'barrel'.</text>
</comment>
<comment type="similarity">
    <text evidence="1">Belongs to the RuBisCO small chain family.</text>
</comment>
<protein>
    <recommendedName>
        <fullName evidence="1">Ribulose bisphosphate carboxylase small subunit, chloroplastic</fullName>
        <shortName evidence="1">RuBisCO small subunit</shortName>
    </recommendedName>
</protein>
<reference key="1">
    <citation type="journal article" date="1987" name="J. Biochem.">
        <title>Nucleotide sequence of cDNA encoding the small subunit of ribulose-1,5-bisphosphate carboxylase from maize.</title>
        <authorList>
            <person name="Matsuoka M."/>
            <person name="Kano-Murakami Y."/>
            <person name="Tanaka Y."/>
            <person name="Ozeki Y."/>
            <person name="Ymamoto N."/>
        </authorList>
    </citation>
    <scope>NUCLEOTIDE SEQUENCE [MRNA]</scope>
</reference>
<reference key="2">
    <citation type="journal article" date="1987" name="Nucleic Acids Res.">
        <title>Nucleotide sequence of a gene encoding corn ribulose-1,5-bisphosphate carboxylase/oxygenase small subunit (rbcs).</title>
        <authorList>
            <person name="Lebrun M."/>
            <person name="Waksman G."/>
            <person name="Freyssinet G."/>
        </authorList>
    </citation>
    <scope>NUCLEOTIDE SEQUENCE [GENOMIC DNA]</scope>
    <source>
        <strain>cv. F2</strain>
    </source>
</reference>
<reference key="3">
    <citation type="journal article" date="1988" name="Biol. Chem. Hoppe-Seyler">
        <title>Ribulose-1,5-bisphosphate carboxylase/oxygenase from Zea mays: amino-acid sequence of the small subunit.</title>
        <authorList>
            <person name="Ren L."/>
            <person name="Salnikow J."/>
            <person name="Vater J."/>
        </authorList>
    </citation>
    <scope>PROTEIN SEQUENCE OF 48-170</scope>
</reference>
<reference key="4">
    <citation type="journal article" date="1991" name="Plant Cell">
        <title>Maize rbcS promoter activity depends on sequence elements not found in dicot rbcS promoters.</title>
        <authorList>
            <person name="Schaffner A.R."/>
            <person name="Sheen J."/>
        </authorList>
    </citation>
    <scope>NUCLEOTIDE SEQUENCE OF 1-10</scope>
</reference>
<feature type="transit peptide" description="Chloroplast" evidence="2">
    <location>
        <begin position="1"/>
        <end position="47"/>
    </location>
</feature>
<feature type="transit peptide" description="Chloroplast" evidence="1">
    <location>
        <begin position="1"/>
        <end position="46"/>
    </location>
</feature>
<feature type="chain" id="PRO_0000031522" description="Ribulose bisphosphate carboxylase small subunit, chloroplastic" evidence="1">
    <location>
        <begin position="47"/>
        <end position="170"/>
    </location>
</feature>
<feature type="sequence variant">
    <original>A</original>
    <variation>I</variation>
    <location>
        <position position="53"/>
    </location>
</feature>
<feature type="sequence variant">
    <original>LR</original>
    <variation>IV</variation>
    <location>
        <begin position="81"/>
        <end position="82"/>
    </location>
</feature>
<feature type="sequence variant">
    <original>W</original>
    <variation>E</variation>
    <location>
        <position position="85"/>
    </location>
</feature>
<feature type="sequence variant">
    <original>S</original>
    <variation>V</variation>
    <location>
        <position position="92"/>
    </location>
</feature>
<feature type="sequence variant">
    <original>V</original>
    <variation>L</variation>
    <location>
        <position position="94"/>
    </location>
</feature>
<feature type="sequence variant">
    <original>N</original>
    <variation>T</variation>
    <location>
        <position position="124"/>
    </location>
</feature>
<feature type="sequence variant">
    <original>Q</original>
    <variation>L</variation>
    <location>
        <position position="128"/>
    </location>
</feature>
<feature type="sequence variant">
    <original>E</original>
    <variation>V</variation>
    <location>
        <position position="132"/>
    </location>
</feature>
<feature type="sequence variant">
    <original>KS</original>
    <variation>AA</variation>
    <location>
        <begin position="138"/>
        <end position="139"/>
    </location>
</feature>
<feature type="sequence variant">
    <original>D</original>
    <variation>G</variation>
    <location>
        <position position="142"/>
    </location>
</feature>
<feature type="sequence variant">
    <original>IK</original>
    <variation>VR</variation>
    <location>
        <begin position="153"/>
        <end position="154"/>
    </location>
</feature>
<feature type="sequence variant">
    <original>A</original>
    <variation>L</variation>
    <location>
        <position position="163"/>
    </location>
</feature>
<feature type="sequence variant">
    <original>K</original>
    <variation>G</variation>
    <location>
        <position position="165"/>
    </location>
</feature>
<feature type="sequence conflict" description="In Ref. 2; CAA68419." evidence="3" ref="2">
    <location>
        <position position="81"/>
    </location>
</feature>
<organism>
    <name type="scientific">Zea mays</name>
    <name type="common">Maize</name>
    <dbReference type="NCBI Taxonomy" id="4577"/>
    <lineage>
        <taxon>Eukaryota</taxon>
        <taxon>Viridiplantae</taxon>
        <taxon>Streptophyta</taxon>
        <taxon>Embryophyta</taxon>
        <taxon>Tracheophyta</taxon>
        <taxon>Spermatophyta</taxon>
        <taxon>Magnoliopsida</taxon>
        <taxon>Liliopsida</taxon>
        <taxon>Poales</taxon>
        <taxon>Poaceae</taxon>
        <taxon>PACMAD clade</taxon>
        <taxon>Panicoideae</taxon>
        <taxon>Andropogonodae</taxon>
        <taxon>Andropogoneae</taxon>
        <taxon>Tripsacinae</taxon>
        <taxon>Zea</taxon>
    </lineage>
</organism>
<name>RBS_MAIZE</name>
<evidence type="ECO:0000255" key="1">
    <source>
        <dbReference type="HAMAP-Rule" id="MF_00860"/>
    </source>
</evidence>
<evidence type="ECO:0000269" key="2">
    <source>
    </source>
</evidence>
<evidence type="ECO:0000305" key="3"/>
<gene>
    <name evidence="1" type="primary">RBCS</name>
</gene>
<accession>P05348</accession>
<accession>Q43355</accession>
<keyword id="KW-0113">Calvin cycle</keyword>
<keyword id="KW-0120">Carbon dioxide fixation</keyword>
<keyword id="KW-0150">Chloroplast</keyword>
<keyword id="KW-0903">Direct protein sequencing</keyword>
<keyword id="KW-0601">Photorespiration</keyword>
<keyword id="KW-0602">Photosynthesis</keyword>
<keyword id="KW-0934">Plastid</keyword>
<keyword id="KW-1185">Reference proteome</keyword>
<keyword id="KW-0809">Transit peptide</keyword>
<dbReference type="EMBL" id="D00170">
    <property type="protein sequence ID" value="BAA00120.1"/>
    <property type="molecule type" value="mRNA"/>
</dbReference>
<dbReference type="EMBL" id="X06535">
    <property type="protein sequence ID" value="CAA29784.1"/>
    <property type="molecule type" value="mRNA"/>
</dbReference>
<dbReference type="EMBL" id="Y00322">
    <property type="protein sequence ID" value="CAA68419.1"/>
    <property type="molecule type" value="Genomic_DNA"/>
</dbReference>
<dbReference type="EMBL" id="S42508">
    <property type="protein sequence ID" value="AAD13825.1"/>
    <property type="molecule type" value="Genomic_DNA"/>
</dbReference>
<dbReference type="EMBL" id="S42568">
    <property type="protein sequence ID" value="AAD13826.1"/>
    <property type="molecule type" value="Genomic_DNA"/>
</dbReference>
<dbReference type="PIR" id="S00534">
    <property type="entry name" value="RKZMS"/>
</dbReference>
<dbReference type="RefSeq" id="NP_001105294.1">
    <property type="nucleotide sequence ID" value="NM_001111824.1"/>
</dbReference>
<dbReference type="SMR" id="P05348"/>
<dbReference type="FunCoup" id="P05348">
    <property type="interactions" value="1044"/>
</dbReference>
<dbReference type="STRING" id="4577.P05348"/>
<dbReference type="PaxDb" id="4577-GRMZM2G098520_P01"/>
<dbReference type="EnsemblPlants" id="Zm00001eb197410_T001">
    <property type="protein sequence ID" value="Zm00001eb197410_P001"/>
    <property type="gene ID" value="Zm00001eb197410"/>
</dbReference>
<dbReference type="GeneID" id="542212"/>
<dbReference type="Gramene" id="Zm00001eb197410_T001">
    <property type="protein sequence ID" value="Zm00001eb197410_P001"/>
    <property type="gene ID" value="Zm00001eb197410"/>
</dbReference>
<dbReference type="KEGG" id="zma:542212"/>
<dbReference type="MaizeGDB" id="62391"/>
<dbReference type="eggNOG" id="ENOG502QT0M">
    <property type="taxonomic scope" value="Eukaryota"/>
</dbReference>
<dbReference type="HOGENOM" id="CLU_098114_1_0_1"/>
<dbReference type="InParanoid" id="P05348"/>
<dbReference type="OMA" id="LRSHWIP"/>
<dbReference type="OrthoDB" id="730667at2759"/>
<dbReference type="SABIO-RK" id="P05348"/>
<dbReference type="Proteomes" id="UP000007305">
    <property type="component" value="Chromosome 4"/>
</dbReference>
<dbReference type="ExpressionAtlas" id="P05348">
    <property type="expression patterns" value="baseline and differential"/>
</dbReference>
<dbReference type="GO" id="GO:0009507">
    <property type="term" value="C:chloroplast"/>
    <property type="evidence" value="ECO:0007669"/>
    <property type="project" value="UniProtKB-SubCell"/>
</dbReference>
<dbReference type="GO" id="GO:0016984">
    <property type="term" value="F:ribulose-bisphosphate carboxylase activity"/>
    <property type="evidence" value="ECO:0007669"/>
    <property type="project" value="UniProtKB-UniRule"/>
</dbReference>
<dbReference type="GO" id="GO:0009853">
    <property type="term" value="P:photorespiration"/>
    <property type="evidence" value="ECO:0007669"/>
    <property type="project" value="UniProtKB-KW"/>
</dbReference>
<dbReference type="GO" id="GO:0019253">
    <property type="term" value="P:reductive pentose-phosphate cycle"/>
    <property type="evidence" value="ECO:0007669"/>
    <property type="project" value="UniProtKB-UniRule"/>
</dbReference>
<dbReference type="CDD" id="cd03527">
    <property type="entry name" value="RuBisCO_small"/>
    <property type="match status" value="1"/>
</dbReference>
<dbReference type="FunFam" id="3.30.190.10:FF:000001">
    <property type="entry name" value="Ribulose bisphosphate carboxylase small chain, chloroplastic"/>
    <property type="match status" value="1"/>
</dbReference>
<dbReference type="Gene3D" id="3.30.190.10">
    <property type="entry name" value="Ribulose bisphosphate carboxylase, small subunit"/>
    <property type="match status" value="1"/>
</dbReference>
<dbReference type="HAMAP" id="MF_00859">
    <property type="entry name" value="RuBisCO_S_bact"/>
    <property type="match status" value="1"/>
</dbReference>
<dbReference type="InterPro" id="IPR024681">
    <property type="entry name" value="RuBisCO_ssu"/>
</dbReference>
<dbReference type="InterPro" id="IPR000894">
    <property type="entry name" value="RuBisCO_ssu_dom"/>
</dbReference>
<dbReference type="InterPro" id="IPR024680">
    <property type="entry name" value="RuBisCO_ssu_N"/>
</dbReference>
<dbReference type="InterPro" id="IPR036385">
    <property type="entry name" value="RuBisCO_ssu_sf"/>
</dbReference>
<dbReference type="PANTHER" id="PTHR31262">
    <property type="entry name" value="RIBULOSE BISPHOSPHATE CARBOXYLASE SMALL CHAIN 1, CHLOROPLASTIC"/>
    <property type="match status" value="1"/>
</dbReference>
<dbReference type="PANTHER" id="PTHR31262:SF10">
    <property type="entry name" value="RIBULOSE BISPHOSPHATE CARBOXYLASE SMALL SUBUNIT 1A, CHLOROPLASTIC-RELATED"/>
    <property type="match status" value="1"/>
</dbReference>
<dbReference type="Pfam" id="PF12338">
    <property type="entry name" value="RbcS"/>
    <property type="match status" value="1"/>
</dbReference>
<dbReference type="Pfam" id="PF00101">
    <property type="entry name" value="RuBisCO_small"/>
    <property type="match status" value="1"/>
</dbReference>
<dbReference type="PRINTS" id="PR00152">
    <property type="entry name" value="RUBISCOSMALL"/>
</dbReference>
<dbReference type="SMART" id="SM00961">
    <property type="entry name" value="RuBisCO_small"/>
    <property type="match status" value="1"/>
</dbReference>
<dbReference type="SUPFAM" id="SSF55239">
    <property type="entry name" value="RuBisCO, small subunit"/>
    <property type="match status" value="1"/>
</dbReference>
<sequence>MAPTVMMASSATAVAPFQGLKSTASLPVARRSSRSLGNVSNGGRIRCMQVWPAYGNKKFETLSYLPPLSTDDLLKQVDYLLRNGWIPCLEFSKVGFVYRENSTSPCYYDGRYWTMWKLPMFGCNDATQVYKELQEAIKSYPDAFHRVIGFDNIKQTQCVSFIAYKPPGSD</sequence>